<gene>
    <name type="primary">MT-ATP8</name>
    <name type="synonym">ATP8</name>
    <name type="synonym">ATPASE8</name>
    <name type="synonym">MTATP8</name>
</gene>
<feature type="chain" id="PRO_0000195575" description="ATP synthase protein 8">
    <location>
        <begin position="1"/>
        <end position="68"/>
    </location>
</feature>
<feature type="transmembrane region" description="Helical" evidence="4">
    <location>
        <begin position="8"/>
        <end position="24"/>
    </location>
</feature>
<feature type="modified residue" description="N6-acetyllysine; alternate" evidence="3">
    <location>
        <position position="54"/>
    </location>
</feature>
<feature type="modified residue" description="N6-succinyllysine; alternate" evidence="3">
    <location>
        <position position="54"/>
    </location>
</feature>
<feature type="modified residue" description="N6-acetyllysine" evidence="3">
    <location>
        <position position="57"/>
    </location>
</feature>
<feature type="sequence conflict" description="In Ref. 1; BAA07309." evidence="5" ref="1">
    <original>I</original>
    <variation>V</variation>
    <location>
        <position position="12"/>
    </location>
</feature>
<feature type="sequence conflict" description="In Ref. 1; BAA07309." evidence="5" ref="1">
    <original>Y</original>
    <variation>S</variation>
    <location>
        <position position="68"/>
    </location>
</feature>
<accession>Q35584</accession>
<accession>P92896</accession>
<keyword id="KW-0007">Acetylation</keyword>
<keyword id="KW-0066">ATP synthesis</keyword>
<keyword id="KW-0138">CF(0)</keyword>
<keyword id="KW-0375">Hydrogen ion transport</keyword>
<keyword id="KW-0406">Ion transport</keyword>
<keyword id="KW-0472">Membrane</keyword>
<keyword id="KW-0496">Mitochondrion</keyword>
<keyword id="KW-0812">Transmembrane</keyword>
<keyword id="KW-1133">Transmembrane helix</keyword>
<keyword id="KW-0813">Transport</keyword>
<reference key="1">
    <citation type="journal article" date="1995" name="Proc. Natl. Acad. Sci. U.S.A.">
        <title>Recent African origin of modern humans revealed by complete sequences of hominoid mitochondrial DNAs.</title>
        <authorList>
            <person name="Horai S."/>
            <person name="Hayasaka K."/>
            <person name="Kondo R."/>
            <person name="Tsugane K."/>
            <person name="Takahata N."/>
        </authorList>
    </citation>
    <scope>NUCLEOTIDE SEQUENCE [GENOMIC DNA]</scope>
</reference>
<reference key="2">
    <citation type="journal article" date="1996" name="J. Mol. Evol.">
        <title>The mitochondrial DNA molecule of Sumatran orangutan and a molecular proposal for two (Bornean and Sumatran) species of orangutan.</title>
        <authorList>
            <person name="Xu X."/>
            <person name="Arnason U."/>
        </authorList>
    </citation>
    <scope>NUCLEOTIDE SEQUENCE [GENOMIC DNA]</scope>
    <source>
        <strain>Isolate Anna</strain>
        <strain>Isolate Dennis</strain>
    </source>
</reference>
<sequence>MPQLNTTTWLTIITPTLLALFLITQLKLLNSHLHPPTPPKFTKTKPHAKPWELKWTKIYSPHSLPPQY</sequence>
<proteinExistence type="inferred from homology"/>
<dbReference type="EMBL" id="D38115">
    <property type="protein sequence ID" value="BAA07309.1"/>
    <property type="molecule type" value="Genomic_DNA"/>
</dbReference>
<dbReference type="EMBL" id="X97715">
    <property type="protein sequence ID" value="CAA66301.1"/>
    <property type="molecule type" value="Genomic_DNA"/>
</dbReference>
<dbReference type="EMBL" id="X97711">
    <property type="protein sequence ID" value="CAA66297.1"/>
    <property type="molecule type" value="Genomic_DNA"/>
</dbReference>
<dbReference type="PIR" id="T14143">
    <property type="entry name" value="T14143"/>
</dbReference>
<dbReference type="RefSeq" id="NP_008229.1">
    <property type="nucleotide sequence ID" value="NC_001646.1"/>
</dbReference>
<dbReference type="SMR" id="Q35584"/>
<dbReference type="GeneID" id="807909"/>
<dbReference type="KEGG" id="ppyg:807909"/>
<dbReference type="CTD" id="4509"/>
<dbReference type="GO" id="GO:0031966">
    <property type="term" value="C:mitochondrial membrane"/>
    <property type="evidence" value="ECO:0007669"/>
    <property type="project" value="UniProtKB-SubCell"/>
</dbReference>
<dbReference type="GO" id="GO:0045259">
    <property type="term" value="C:proton-transporting ATP synthase complex"/>
    <property type="evidence" value="ECO:0000250"/>
    <property type="project" value="UniProtKB"/>
</dbReference>
<dbReference type="GO" id="GO:0015078">
    <property type="term" value="F:proton transmembrane transporter activity"/>
    <property type="evidence" value="ECO:0007669"/>
    <property type="project" value="InterPro"/>
</dbReference>
<dbReference type="GO" id="GO:0015986">
    <property type="term" value="P:proton motive force-driven ATP synthesis"/>
    <property type="evidence" value="ECO:0007669"/>
    <property type="project" value="InterPro"/>
</dbReference>
<dbReference type="InterPro" id="IPR039017">
    <property type="entry name" value="ATP8_mammal"/>
</dbReference>
<dbReference type="InterPro" id="IPR001421">
    <property type="entry name" value="ATP8_metazoa"/>
</dbReference>
<dbReference type="PANTHER" id="PTHR13722">
    <property type="entry name" value="ATP SYNTHASE PROTEIN 8"/>
    <property type="match status" value="1"/>
</dbReference>
<dbReference type="PANTHER" id="PTHR13722:SF0">
    <property type="entry name" value="ATP SYNTHASE PROTEIN 8"/>
    <property type="match status" value="1"/>
</dbReference>
<dbReference type="Pfam" id="PF00895">
    <property type="entry name" value="ATP-synt_8"/>
    <property type="match status" value="1"/>
</dbReference>
<name>ATP8_PONPY</name>
<protein>
    <recommendedName>
        <fullName>ATP synthase protein 8</fullName>
    </recommendedName>
    <alternativeName>
        <fullName>A6L</fullName>
    </alternativeName>
    <alternativeName>
        <fullName>F-ATPase subunit 8</fullName>
    </alternativeName>
</protein>
<organism>
    <name type="scientific">Pongo pygmaeus</name>
    <name type="common">Bornean orangutan</name>
    <dbReference type="NCBI Taxonomy" id="9600"/>
    <lineage>
        <taxon>Eukaryota</taxon>
        <taxon>Metazoa</taxon>
        <taxon>Chordata</taxon>
        <taxon>Craniata</taxon>
        <taxon>Vertebrata</taxon>
        <taxon>Euteleostomi</taxon>
        <taxon>Mammalia</taxon>
        <taxon>Eutheria</taxon>
        <taxon>Euarchontoglires</taxon>
        <taxon>Primates</taxon>
        <taxon>Haplorrhini</taxon>
        <taxon>Catarrhini</taxon>
        <taxon>Hominidae</taxon>
        <taxon>Pongo</taxon>
    </lineage>
</organism>
<comment type="function">
    <text evidence="1">Mitochondrial membrane ATP synthase (F(1)F(0) ATP synthase or Complex V) produces ATP from ADP in the presence of a proton gradient across the membrane which is generated by electron transport complexes of the respiratory chain. F-type ATPases consist of two structural domains, F(1) - containing the extramembraneous catalytic core and F(0) - containing the membrane proton channel, linked together by a central stalk and a peripheral stalk. During catalysis, ATP synthesis in the catalytic domain of F(1) is coupled via a rotary mechanism of the central stalk subunits to proton translocation. Part of the complex F(0) domain. Minor subunit located with subunit a in the membrane (By similarity).</text>
</comment>
<comment type="subunit">
    <text evidence="2">F-type ATPases have 2 components, CF(1) - the catalytic core - and CF(0) - the membrane proton channel. Component of an ATP synthase complex composed of ATP5PB, ATP5MC1, ATP5F1E, ATP5PD, ATP5ME, ATP5PF, ATP5MF, MT-ATP6, MT-ATP8, ATP5F1A, ATP5F1B, ATP5F1D, ATP5F1C, ATP5PO, ATP5MG, ATP5MK and ATP5MJ (By similarity). Interacts with PRICKLE3 (By similarity).</text>
</comment>
<comment type="subcellular location">
    <subcellularLocation>
        <location>Mitochondrion membrane</location>
        <topology>Single-pass membrane protein</topology>
    </subcellularLocation>
</comment>
<comment type="similarity">
    <text evidence="5">Belongs to the ATPase protein 8 family.</text>
</comment>
<geneLocation type="mitochondrion"/>
<evidence type="ECO:0000250" key="1"/>
<evidence type="ECO:0000250" key="2">
    <source>
        <dbReference type="UniProtKB" id="P03928"/>
    </source>
</evidence>
<evidence type="ECO:0000250" key="3">
    <source>
        <dbReference type="UniProtKB" id="P03930"/>
    </source>
</evidence>
<evidence type="ECO:0000255" key="4"/>
<evidence type="ECO:0000305" key="5"/>